<protein>
    <recommendedName>
        <fullName evidence="1">Tyrosine recombinase XerC</fullName>
    </recommendedName>
</protein>
<organism>
    <name type="scientific">Xanthomonas campestris pv. campestris (strain 8004)</name>
    <dbReference type="NCBI Taxonomy" id="314565"/>
    <lineage>
        <taxon>Bacteria</taxon>
        <taxon>Pseudomonadati</taxon>
        <taxon>Pseudomonadota</taxon>
        <taxon>Gammaproteobacteria</taxon>
        <taxon>Lysobacterales</taxon>
        <taxon>Lysobacteraceae</taxon>
        <taxon>Xanthomonas</taxon>
    </lineage>
</organism>
<sequence length="322" mass="35004">MPEAAPPVADARGSSPTATTGPGADATLSAVEPFLAHLQIERQVSAHTLDAYRRDLAALIGWASAQGSEDVAQLDSAQLRKFVTAEHRRGLSPKSLQRRLSACRSYYAWLLKHGRIATSPAAALRAPKAPRKLPQVLDADEAVRLVEVPTDAPLGLRDRALLELFYSSGLRLSELCALRWRDLDLDSGLVTVLGKGGKQRLVPVGSHAVAALRAWQRDSGGSAQTHVFPGRAGGAISQRAVQIRIKQLAVRQGMFKHVHPHMLRHSFASHILESSGDLRGVQELLGHSDIATTQIYTHLDFQHLAKVYDAAHPRAKRKKATE</sequence>
<feature type="chain" id="PRO_1000088248" description="Tyrosine recombinase XerC">
    <location>
        <begin position="1"/>
        <end position="322"/>
    </location>
</feature>
<feature type="domain" description="Core-binding (CB)" evidence="3">
    <location>
        <begin position="25"/>
        <end position="111"/>
    </location>
</feature>
<feature type="domain" description="Tyr recombinase" evidence="2">
    <location>
        <begin position="132"/>
        <end position="309"/>
    </location>
</feature>
<feature type="region of interest" description="Disordered" evidence="4">
    <location>
        <begin position="1"/>
        <end position="25"/>
    </location>
</feature>
<feature type="compositionally biased region" description="Low complexity" evidence="4">
    <location>
        <begin position="16"/>
        <end position="25"/>
    </location>
</feature>
<feature type="active site" evidence="1">
    <location>
        <position position="171"/>
    </location>
</feature>
<feature type="active site" evidence="1">
    <location>
        <position position="195"/>
    </location>
</feature>
<feature type="active site" evidence="1">
    <location>
        <position position="261"/>
    </location>
</feature>
<feature type="active site" evidence="1">
    <location>
        <position position="264"/>
    </location>
</feature>
<feature type="active site" evidence="1">
    <location>
        <position position="287"/>
    </location>
</feature>
<feature type="active site" description="O-(3'-phospho-DNA)-tyrosine intermediate" evidence="1">
    <location>
        <position position="296"/>
    </location>
</feature>
<gene>
    <name evidence="1" type="primary">xerC</name>
    <name type="ordered locus">XC_0664</name>
</gene>
<accession>Q4UYY0</accession>
<reference key="1">
    <citation type="journal article" date="2005" name="Genome Res.">
        <title>Comparative and functional genomic analyses of the pathogenicity of phytopathogen Xanthomonas campestris pv. campestris.</title>
        <authorList>
            <person name="Qian W."/>
            <person name="Jia Y."/>
            <person name="Ren S.-X."/>
            <person name="He Y.-Q."/>
            <person name="Feng J.-X."/>
            <person name="Lu L.-F."/>
            <person name="Sun Q."/>
            <person name="Ying G."/>
            <person name="Tang D.-J."/>
            <person name="Tang H."/>
            <person name="Wu W."/>
            <person name="Hao P."/>
            <person name="Wang L."/>
            <person name="Jiang B.-L."/>
            <person name="Zeng S."/>
            <person name="Gu W.-Y."/>
            <person name="Lu G."/>
            <person name="Rong L."/>
            <person name="Tian Y."/>
            <person name="Yao Z."/>
            <person name="Fu G."/>
            <person name="Chen B."/>
            <person name="Fang R."/>
            <person name="Qiang B."/>
            <person name="Chen Z."/>
            <person name="Zhao G.-P."/>
            <person name="Tang J.-L."/>
            <person name="He C."/>
        </authorList>
    </citation>
    <scope>NUCLEOTIDE SEQUENCE [LARGE SCALE GENOMIC DNA]</scope>
    <source>
        <strain>8004</strain>
    </source>
</reference>
<dbReference type="EMBL" id="CP000050">
    <property type="protein sequence ID" value="AAY47743.1"/>
    <property type="molecule type" value="Genomic_DNA"/>
</dbReference>
<dbReference type="RefSeq" id="WP_011038589.1">
    <property type="nucleotide sequence ID" value="NZ_CP155948.1"/>
</dbReference>
<dbReference type="SMR" id="Q4UYY0"/>
<dbReference type="KEGG" id="xcb:XC_0664"/>
<dbReference type="HOGENOM" id="CLU_027562_9_0_6"/>
<dbReference type="Proteomes" id="UP000000420">
    <property type="component" value="Chromosome"/>
</dbReference>
<dbReference type="GO" id="GO:0005737">
    <property type="term" value="C:cytoplasm"/>
    <property type="evidence" value="ECO:0007669"/>
    <property type="project" value="UniProtKB-SubCell"/>
</dbReference>
<dbReference type="GO" id="GO:0003677">
    <property type="term" value="F:DNA binding"/>
    <property type="evidence" value="ECO:0007669"/>
    <property type="project" value="UniProtKB-KW"/>
</dbReference>
<dbReference type="GO" id="GO:0009037">
    <property type="term" value="F:tyrosine-based site-specific recombinase activity"/>
    <property type="evidence" value="ECO:0007669"/>
    <property type="project" value="UniProtKB-UniRule"/>
</dbReference>
<dbReference type="GO" id="GO:0051301">
    <property type="term" value="P:cell division"/>
    <property type="evidence" value="ECO:0007669"/>
    <property type="project" value="UniProtKB-KW"/>
</dbReference>
<dbReference type="GO" id="GO:0007059">
    <property type="term" value="P:chromosome segregation"/>
    <property type="evidence" value="ECO:0007669"/>
    <property type="project" value="UniProtKB-UniRule"/>
</dbReference>
<dbReference type="GO" id="GO:0006313">
    <property type="term" value="P:DNA transposition"/>
    <property type="evidence" value="ECO:0007669"/>
    <property type="project" value="UniProtKB-UniRule"/>
</dbReference>
<dbReference type="CDD" id="cd00798">
    <property type="entry name" value="INT_XerDC_C"/>
    <property type="match status" value="1"/>
</dbReference>
<dbReference type="Gene3D" id="1.10.150.130">
    <property type="match status" value="1"/>
</dbReference>
<dbReference type="Gene3D" id="1.10.443.10">
    <property type="entry name" value="Intergrase catalytic core"/>
    <property type="match status" value="1"/>
</dbReference>
<dbReference type="HAMAP" id="MF_01808">
    <property type="entry name" value="Recomb_XerC_XerD"/>
    <property type="match status" value="1"/>
</dbReference>
<dbReference type="InterPro" id="IPR044068">
    <property type="entry name" value="CB"/>
</dbReference>
<dbReference type="InterPro" id="IPR011010">
    <property type="entry name" value="DNA_brk_join_enz"/>
</dbReference>
<dbReference type="InterPro" id="IPR013762">
    <property type="entry name" value="Integrase-like_cat_sf"/>
</dbReference>
<dbReference type="InterPro" id="IPR002104">
    <property type="entry name" value="Integrase_catalytic"/>
</dbReference>
<dbReference type="InterPro" id="IPR010998">
    <property type="entry name" value="Integrase_recombinase_N"/>
</dbReference>
<dbReference type="InterPro" id="IPR004107">
    <property type="entry name" value="Integrase_SAM-like_N"/>
</dbReference>
<dbReference type="InterPro" id="IPR011931">
    <property type="entry name" value="Recomb_XerC"/>
</dbReference>
<dbReference type="InterPro" id="IPR023009">
    <property type="entry name" value="Tyrosine_recombinase_XerC/XerD"/>
</dbReference>
<dbReference type="InterPro" id="IPR050090">
    <property type="entry name" value="Tyrosine_recombinase_XerCD"/>
</dbReference>
<dbReference type="NCBIfam" id="NF001399">
    <property type="entry name" value="PRK00283.1"/>
    <property type="match status" value="1"/>
</dbReference>
<dbReference type="NCBIfam" id="TIGR02224">
    <property type="entry name" value="recomb_XerC"/>
    <property type="match status" value="1"/>
</dbReference>
<dbReference type="PANTHER" id="PTHR30349">
    <property type="entry name" value="PHAGE INTEGRASE-RELATED"/>
    <property type="match status" value="1"/>
</dbReference>
<dbReference type="PANTHER" id="PTHR30349:SF81">
    <property type="entry name" value="TYROSINE RECOMBINASE XERC"/>
    <property type="match status" value="1"/>
</dbReference>
<dbReference type="Pfam" id="PF02899">
    <property type="entry name" value="Phage_int_SAM_1"/>
    <property type="match status" value="1"/>
</dbReference>
<dbReference type="Pfam" id="PF00589">
    <property type="entry name" value="Phage_integrase"/>
    <property type="match status" value="1"/>
</dbReference>
<dbReference type="SUPFAM" id="SSF56349">
    <property type="entry name" value="DNA breaking-rejoining enzymes"/>
    <property type="match status" value="1"/>
</dbReference>
<dbReference type="PROSITE" id="PS51900">
    <property type="entry name" value="CB"/>
    <property type="match status" value="1"/>
</dbReference>
<dbReference type="PROSITE" id="PS51898">
    <property type="entry name" value="TYR_RECOMBINASE"/>
    <property type="match status" value="1"/>
</dbReference>
<keyword id="KW-0131">Cell cycle</keyword>
<keyword id="KW-0132">Cell division</keyword>
<keyword id="KW-0159">Chromosome partition</keyword>
<keyword id="KW-0963">Cytoplasm</keyword>
<keyword id="KW-0229">DNA integration</keyword>
<keyword id="KW-0233">DNA recombination</keyword>
<keyword id="KW-0238">DNA-binding</keyword>
<name>XERC_XANC8</name>
<evidence type="ECO:0000255" key="1">
    <source>
        <dbReference type="HAMAP-Rule" id="MF_01808"/>
    </source>
</evidence>
<evidence type="ECO:0000255" key="2">
    <source>
        <dbReference type="PROSITE-ProRule" id="PRU01246"/>
    </source>
</evidence>
<evidence type="ECO:0000255" key="3">
    <source>
        <dbReference type="PROSITE-ProRule" id="PRU01248"/>
    </source>
</evidence>
<evidence type="ECO:0000256" key="4">
    <source>
        <dbReference type="SAM" id="MobiDB-lite"/>
    </source>
</evidence>
<comment type="function">
    <text evidence="1">Site-specific tyrosine recombinase, which acts by catalyzing the cutting and rejoining of the recombining DNA molecules. The XerC-XerD complex is essential to convert dimers of the bacterial chromosome into monomers to permit their segregation at cell division. It also contributes to the segregational stability of plasmids.</text>
</comment>
<comment type="subunit">
    <text evidence="1">Forms a cyclic heterotetrameric complex composed of two molecules of XerC and two molecules of XerD.</text>
</comment>
<comment type="subcellular location">
    <subcellularLocation>
        <location evidence="1">Cytoplasm</location>
    </subcellularLocation>
</comment>
<comment type="similarity">
    <text evidence="1">Belongs to the 'phage' integrase family. XerC subfamily.</text>
</comment>
<proteinExistence type="inferred from homology"/>